<sequence>MKPSIVLYKNIPADLRERLEQHFTVHAFDGLTPDNHDELRQALQQAEGIIGSGGKIDEAFLQQTPKLRAASTISVGYDNFDVDALNAHNVLLMHTPTVLTETVADTIMSLVLATARRVVEVAERVKAGEWQGSIGADWFGVDVHHKTIGILGMGRIGLALAQRAHFGFGMPVLYNARRTHEEAEQRFNARRCDLDTLLAESDFICITLPLTDETFHMISRDQLAKMKKSGILINAGRGPVVDEAALIEALQNGTIHAAGLDVFEKEPLPVSSPLLTLPNVVALPHIGSATHETRYGMAECAVDNLIAALTGTVKENCVNPQLLKK</sequence>
<reference key="1">
    <citation type="submission" date="2007-09" db="EMBL/GenBank/DDBJ databases">
        <title>Complete sequence of chromosome of Serratia proteamaculans 568.</title>
        <authorList>
            <consortium name="US DOE Joint Genome Institute"/>
            <person name="Copeland A."/>
            <person name="Lucas S."/>
            <person name="Lapidus A."/>
            <person name="Barry K."/>
            <person name="Glavina del Rio T."/>
            <person name="Dalin E."/>
            <person name="Tice H."/>
            <person name="Pitluck S."/>
            <person name="Chain P."/>
            <person name="Malfatti S."/>
            <person name="Shin M."/>
            <person name="Vergez L."/>
            <person name="Schmutz J."/>
            <person name="Larimer F."/>
            <person name="Land M."/>
            <person name="Hauser L."/>
            <person name="Kyrpides N."/>
            <person name="Kim E."/>
            <person name="Taghavi S."/>
            <person name="Newman L."/>
            <person name="Vangronsveld J."/>
            <person name="van der Lelie D."/>
            <person name="Richardson P."/>
        </authorList>
    </citation>
    <scope>NUCLEOTIDE SEQUENCE [LARGE SCALE GENOMIC DNA]</scope>
    <source>
        <strain>568</strain>
    </source>
</reference>
<organism>
    <name type="scientific">Serratia proteamaculans (strain 568)</name>
    <dbReference type="NCBI Taxonomy" id="399741"/>
    <lineage>
        <taxon>Bacteria</taxon>
        <taxon>Pseudomonadati</taxon>
        <taxon>Pseudomonadota</taxon>
        <taxon>Gammaproteobacteria</taxon>
        <taxon>Enterobacterales</taxon>
        <taxon>Yersiniaceae</taxon>
        <taxon>Serratia</taxon>
    </lineage>
</organism>
<proteinExistence type="inferred from homology"/>
<protein>
    <recommendedName>
        <fullName evidence="1">Glyoxylate/hydroxypyruvate reductase B</fullName>
        <ecNumber evidence="1">1.1.1.79</ecNumber>
        <ecNumber evidence="1">1.1.1.81</ecNumber>
    </recommendedName>
</protein>
<evidence type="ECO:0000255" key="1">
    <source>
        <dbReference type="HAMAP-Rule" id="MF_01667"/>
    </source>
</evidence>
<feature type="chain" id="PRO_0000348398" description="Glyoxylate/hydroxypyruvate reductase B">
    <location>
        <begin position="1"/>
        <end position="325"/>
    </location>
</feature>
<feature type="active site" evidence="1">
    <location>
        <position position="237"/>
    </location>
</feature>
<feature type="active site" evidence="1">
    <location>
        <position position="266"/>
    </location>
</feature>
<feature type="active site" description="Proton donor" evidence="1">
    <location>
        <position position="285"/>
    </location>
</feature>
<gene>
    <name evidence="1" type="primary">ghrB</name>
    <name type="ordered locus">Spro_0057</name>
</gene>
<accession>A8G7S7</accession>
<name>GHRB_SERP5</name>
<dbReference type="EC" id="1.1.1.79" evidence="1"/>
<dbReference type="EC" id="1.1.1.81" evidence="1"/>
<dbReference type="EMBL" id="CP000826">
    <property type="protein sequence ID" value="ABV39167.1"/>
    <property type="molecule type" value="Genomic_DNA"/>
</dbReference>
<dbReference type="SMR" id="A8G7S7"/>
<dbReference type="STRING" id="399741.Spro_0057"/>
<dbReference type="KEGG" id="spe:Spro_0057"/>
<dbReference type="eggNOG" id="COG1052">
    <property type="taxonomic scope" value="Bacteria"/>
</dbReference>
<dbReference type="HOGENOM" id="CLU_019796_1_2_6"/>
<dbReference type="OrthoDB" id="9805416at2"/>
<dbReference type="GO" id="GO:0005829">
    <property type="term" value="C:cytosol"/>
    <property type="evidence" value="ECO:0007669"/>
    <property type="project" value="TreeGrafter"/>
</dbReference>
<dbReference type="GO" id="GO:0005886">
    <property type="term" value="C:plasma membrane"/>
    <property type="evidence" value="ECO:0007669"/>
    <property type="project" value="UniProtKB-UniRule"/>
</dbReference>
<dbReference type="GO" id="GO:0030267">
    <property type="term" value="F:glyoxylate reductase (NADPH) activity"/>
    <property type="evidence" value="ECO:0007669"/>
    <property type="project" value="UniProtKB-UniRule"/>
</dbReference>
<dbReference type="GO" id="GO:0008465">
    <property type="term" value="F:hydroxypyruvate reductase (NADH) activity"/>
    <property type="evidence" value="ECO:0007669"/>
    <property type="project" value="RHEA"/>
</dbReference>
<dbReference type="GO" id="GO:0120509">
    <property type="term" value="F:hydroxypyruvate reductase (NADPH) activity"/>
    <property type="evidence" value="ECO:0007669"/>
    <property type="project" value="RHEA"/>
</dbReference>
<dbReference type="GO" id="GO:0051287">
    <property type="term" value="F:NAD binding"/>
    <property type="evidence" value="ECO:0007669"/>
    <property type="project" value="InterPro"/>
</dbReference>
<dbReference type="CDD" id="cd05301">
    <property type="entry name" value="GDH"/>
    <property type="match status" value="1"/>
</dbReference>
<dbReference type="FunFam" id="3.40.50.720:FF:000026">
    <property type="entry name" value="Glyoxylate/hydroxypyruvate reductase B"/>
    <property type="match status" value="1"/>
</dbReference>
<dbReference type="Gene3D" id="3.40.50.720">
    <property type="entry name" value="NAD(P)-binding Rossmann-like Domain"/>
    <property type="match status" value="2"/>
</dbReference>
<dbReference type="HAMAP" id="MF_01667">
    <property type="entry name" value="2_Hacid_dh_C_GhrB"/>
    <property type="match status" value="1"/>
</dbReference>
<dbReference type="InterPro" id="IPR050223">
    <property type="entry name" value="D-isomer_2-hydroxyacid_DH"/>
</dbReference>
<dbReference type="InterPro" id="IPR006139">
    <property type="entry name" value="D-isomer_2_OHA_DH_cat_dom"/>
</dbReference>
<dbReference type="InterPro" id="IPR029753">
    <property type="entry name" value="D-isomer_DH_CS"/>
</dbReference>
<dbReference type="InterPro" id="IPR006140">
    <property type="entry name" value="D-isomer_DH_NAD-bd"/>
</dbReference>
<dbReference type="InterPro" id="IPR023756">
    <property type="entry name" value="Glyo/OHPyrv_Rdtase_B"/>
</dbReference>
<dbReference type="InterPro" id="IPR036291">
    <property type="entry name" value="NAD(P)-bd_dom_sf"/>
</dbReference>
<dbReference type="NCBIfam" id="NF011938">
    <property type="entry name" value="PRK15409.1"/>
    <property type="match status" value="1"/>
</dbReference>
<dbReference type="PANTHER" id="PTHR10996">
    <property type="entry name" value="2-HYDROXYACID DEHYDROGENASE-RELATED"/>
    <property type="match status" value="1"/>
</dbReference>
<dbReference type="PANTHER" id="PTHR10996:SF283">
    <property type="entry name" value="GLYOXYLATE_HYDROXYPYRUVATE REDUCTASE B"/>
    <property type="match status" value="1"/>
</dbReference>
<dbReference type="Pfam" id="PF00389">
    <property type="entry name" value="2-Hacid_dh"/>
    <property type="match status" value="1"/>
</dbReference>
<dbReference type="Pfam" id="PF02826">
    <property type="entry name" value="2-Hacid_dh_C"/>
    <property type="match status" value="1"/>
</dbReference>
<dbReference type="SUPFAM" id="SSF52283">
    <property type="entry name" value="Formate/glycerate dehydrogenase catalytic domain-like"/>
    <property type="match status" value="1"/>
</dbReference>
<dbReference type="SUPFAM" id="SSF51735">
    <property type="entry name" value="NAD(P)-binding Rossmann-fold domains"/>
    <property type="match status" value="1"/>
</dbReference>
<dbReference type="PROSITE" id="PS00671">
    <property type="entry name" value="D_2_HYDROXYACID_DH_3"/>
    <property type="match status" value="1"/>
</dbReference>
<keyword id="KW-0963">Cytoplasm</keyword>
<keyword id="KW-0520">NAD</keyword>
<keyword id="KW-0521">NADP</keyword>
<keyword id="KW-0560">Oxidoreductase</keyword>
<comment type="function">
    <text evidence="1">Catalyzes the NADPH-dependent reduction of glyoxylate and hydroxypyruvate into glycolate and glycerate, respectively.</text>
</comment>
<comment type="catalytic activity">
    <reaction evidence="1">
        <text>glycolate + NADP(+) = glyoxylate + NADPH + H(+)</text>
        <dbReference type="Rhea" id="RHEA:10992"/>
        <dbReference type="ChEBI" id="CHEBI:15378"/>
        <dbReference type="ChEBI" id="CHEBI:29805"/>
        <dbReference type="ChEBI" id="CHEBI:36655"/>
        <dbReference type="ChEBI" id="CHEBI:57783"/>
        <dbReference type="ChEBI" id="CHEBI:58349"/>
        <dbReference type="EC" id="1.1.1.79"/>
    </reaction>
</comment>
<comment type="catalytic activity">
    <reaction evidence="1">
        <text>(R)-glycerate + NAD(+) = 3-hydroxypyruvate + NADH + H(+)</text>
        <dbReference type="Rhea" id="RHEA:17905"/>
        <dbReference type="ChEBI" id="CHEBI:15378"/>
        <dbReference type="ChEBI" id="CHEBI:16659"/>
        <dbReference type="ChEBI" id="CHEBI:17180"/>
        <dbReference type="ChEBI" id="CHEBI:57540"/>
        <dbReference type="ChEBI" id="CHEBI:57945"/>
        <dbReference type="EC" id="1.1.1.81"/>
    </reaction>
</comment>
<comment type="catalytic activity">
    <reaction evidence="1">
        <text>(R)-glycerate + NADP(+) = 3-hydroxypyruvate + NADPH + H(+)</text>
        <dbReference type="Rhea" id="RHEA:18657"/>
        <dbReference type="ChEBI" id="CHEBI:15378"/>
        <dbReference type="ChEBI" id="CHEBI:16659"/>
        <dbReference type="ChEBI" id="CHEBI:17180"/>
        <dbReference type="ChEBI" id="CHEBI:57783"/>
        <dbReference type="ChEBI" id="CHEBI:58349"/>
        <dbReference type="EC" id="1.1.1.81"/>
    </reaction>
</comment>
<comment type="subunit">
    <text evidence="1">Homodimer.</text>
</comment>
<comment type="subcellular location">
    <subcellularLocation>
        <location evidence="1">Cytoplasm</location>
    </subcellularLocation>
</comment>
<comment type="similarity">
    <text evidence="1">Belongs to the D-isomer specific 2-hydroxyacid dehydrogenase family. GhrB subfamily.</text>
</comment>